<keyword id="KW-0067">ATP-binding</keyword>
<keyword id="KW-0143">Chaperone</keyword>
<keyword id="KW-0547">Nucleotide-binding</keyword>
<protein>
    <recommendedName>
        <fullName evidence="1">Chaperone protein HscA homolog</fullName>
    </recommendedName>
</protein>
<accession>A7MU49</accession>
<comment type="function">
    <text evidence="1">Chaperone involved in the maturation of iron-sulfur cluster-containing proteins. Has a low intrinsic ATPase activity which is markedly stimulated by HscB.</text>
</comment>
<comment type="similarity">
    <text evidence="1">Belongs to the heat shock protein 70 family.</text>
</comment>
<gene>
    <name evidence="1" type="primary">hscA</name>
    <name type="ordered locus">VIBHAR_01059</name>
</gene>
<reference key="1">
    <citation type="submission" date="2007-08" db="EMBL/GenBank/DDBJ databases">
        <authorList>
            <consortium name="The Vibrio harveyi Genome Sequencing Project"/>
            <person name="Bassler B."/>
            <person name="Clifton S.W."/>
            <person name="Fulton L."/>
            <person name="Delehaunty K."/>
            <person name="Fronick C."/>
            <person name="Harrison M."/>
            <person name="Markivic C."/>
            <person name="Fulton R."/>
            <person name="Tin-Wollam A.-M."/>
            <person name="Shah N."/>
            <person name="Pepin K."/>
            <person name="Nash W."/>
            <person name="Thiruvilangam P."/>
            <person name="Bhonagiri V."/>
            <person name="Waters C."/>
            <person name="Tu K.C."/>
            <person name="Irgon J."/>
            <person name="Wilson R.K."/>
        </authorList>
    </citation>
    <scope>NUCLEOTIDE SEQUENCE [LARGE SCALE GENOMIC DNA]</scope>
    <source>
        <strain>ATCC BAA-1116 / BB120</strain>
    </source>
</reference>
<dbReference type="EMBL" id="CP000789">
    <property type="protein sequence ID" value="ABU70052.1"/>
    <property type="molecule type" value="Genomic_DNA"/>
</dbReference>
<dbReference type="RefSeq" id="WP_012127088.1">
    <property type="nucleotide sequence ID" value="NC_009783.1"/>
</dbReference>
<dbReference type="SMR" id="A7MU49"/>
<dbReference type="KEGG" id="vha:VIBHAR_01059"/>
<dbReference type="PATRIC" id="fig|338187.25.peg.1569"/>
<dbReference type="Proteomes" id="UP000008152">
    <property type="component" value="Chromosome I"/>
</dbReference>
<dbReference type="GO" id="GO:0005524">
    <property type="term" value="F:ATP binding"/>
    <property type="evidence" value="ECO:0007669"/>
    <property type="project" value="UniProtKB-KW"/>
</dbReference>
<dbReference type="GO" id="GO:0016887">
    <property type="term" value="F:ATP hydrolysis activity"/>
    <property type="evidence" value="ECO:0007669"/>
    <property type="project" value="UniProtKB-UniRule"/>
</dbReference>
<dbReference type="GO" id="GO:0140662">
    <property type="term" value="F:ATP-dependent protein folding chaperone"/>
    <property type="evidence" value="ECO:0007669"/>
    <property type="project" value="InterPro"/>
</dbReference>
<dbReference type="GO" id="GO:0051082">
    <property type="term" value="F:unfolded protein binding"/>
    <property type="evidence" value="ECO:0007669"/>
    <property type="project" value="InterPro"/>
</dbReference>
<dbReference type="GO" id="GO:0016226">
    <property type="term" value="P:iron-sulfur cluster assembly"/>
    <property type="evidence" value="ECO:0007669"/>
    <property type="project" value="InterPro"/>
</dbReference>
<dbReference type="CDD" id="cd10236">
    <property type="entry name" value="ASKHA_NBD_HSP70_HscA"/>
    <property type="match status" value="1"/>
</dbReference>
<dbReference type="FunFam" id="3.30.420.40:FF:000046">
    <property type="entry name" value="Chaperone protein HscA"/>
    <property type="match status" value="1"/>
</dbReference>
<dbReference type="FunFam" id="2.60.34.10:FF:000005">
    <property type="entry name" value="Chaperone protein HscA homolog"/>
    <property type="match status" value="1"/>
</dbReference>
<dbReference type="FunFam" id="3.30.420.40:FF:000020">
    <property type="entry name" value="Chaperone protein HscA homolog"/>
    <property type="match status" value="1"/>
</dbReference>
<dbReference type="Gene3D" id="1.20.1270.10">
    <property type="match status" value="1"/>
</dbReference>
<dbReference type="Gene3D" id="3.30.420.40">
    <property type="match status" value="2"/>
</dbReference>
<dbReference type="Gene3D" id="3.90.640.10">
    <property type="entry name" value="Actin, Chain A, domain 4"/>
    <property type="match status" value="1"/>
</dbReference>
<dbReference type="Gene3D" id="2.60.34.10">
    <property type="entry name" value="Substrate Binding Domain Of DNAk, Chain A, domain 1"/>
    <property type="match status" value="1"/>
</dbReference>
<dbReference type="HAMAP" id="MF_00679">
    <property type="entry name" value="HscA"/>
    <property type="match status" value="1"/>
</dbReference>
<dbReference type="InterPro" id="IPR043129">
    <property type="entry name" value="ATPase_NBD"/>
</dbReference>
<dbReference type="InterPro" id="IPR018181">
    <property type="entry name" value="Heat_shock_70_CS"/>
</dbReference>
<dbReference type="InterPro" id="IPR042039">
    <property type="entry name" value="HscA_NBD"/>
</dbReference>
<dbReference type="InterPro" id="IPR029048">
    <property type="entry name" value="HSP70_C_sf"/>
</dbReference>
<dbReference type="InterPro" id="IPR029047">
    <property type="entry name" value="HSP70_peptide-bd_sf"/>
</dbReference>
<dbReference type="InterPro" id="IPR013126">
    <property type="entry name" value="Hsp_70_fam"/>
</dbReference>
<dbReference type="InterPro" id="IPR010236">
    <property type="entry name" value="ISC_FeS_clus_asmbl_HscA"/>
</dbReference>
<dbReference type="NCBIfam" id="TIGR01991">
    <property type="entry name" value="HscA"/>
    <property type="match status" value="1"/>
</dbReference>
<dbReference type="NCBIfam" id="NF003520">
    <property type="entry name" value="PRK05183.1"/>
    <property type="match status" value="1"/>
</dbReference>
<dbReference type="PANTHER" id="PTHR19375">
    <property type="entry name" value="HEAT SHOCK PROTEIN 70KDA"/>
    <property type="match status" value="1"/>
</dbReference>
<dbReference type="Pfam" id="PF00012">
    <property type="entry name" value="HSP70"/>
    <property type="match status" value="1"/>
</dbReference>
<dbReference type="PRINTS" id="PR00301">
    <property type="entry name" value="HEATSHOCK70"/>
</dbReference>
<dbReference type="SUPFAM" id="SSF53067">
    <property type="entry name" value="Actin-like ATPase domain"/>
    <property type="match status" value="2"/>
</dbReference>
<dbReference type="SUPFAM" id="SSF100934">
    <property type="entry name" value="Heat shock protein 70kD (HSP70), C-terminal subdomain"/>
    <property type="match status" value="1"/>
</dbReference>
<dbReference type="SUPFAM" id="SSF100920">
    <property type="entry name" value="Heat shock protein 70kD (HSP70), peptide-binding domain"/>
    <property type="match status" value="1"/>
</dbReference>
<dbReference type="PROSITE" id="PS00297">
    <property type="entry name" value="HSP70_1"/>
    <property type="match status" value="1"/>
</dbReference>
<dbReference type="PROSITE" id="PS00329">
    <property type="entry name" value="HSP70_2"/>
    <property type="match status" value="1"/>
</dbReference>
<feature type="chain" id="PRO_1000044902" description="Chaperone protein HscA homolog">
    <location>
        <begin position="1"/>
        <end position="617"/>
    </location>
</feature>
<organism>
    <name type="scientific">Vibrio campbellii (strain ATCC BAA-1116)</name>
    <dbReference type="NCBI Taxonomy" id="2902295"/>
    <lineage>
        <taxon>Bacteria</taxon>
        <taxon>Pseudomonadati</taxon>
        <taxon>Pseudomonadota</taxon>
        <taxon>Gammaproteobacteria</taxon>
        <taxon>Vibrionales</taxon>
        <taxon>Vibrionaceae</taxon>
        <taxon>Vibrio</taxon>
    </lineage>
</organism>
<proteinExistence type="inferred from homology"/>
<sequence length="617" mass="66100">MALLQIAEPGQSSAPHEHKLAAGIDLGTTNSLVASVRSGDAKTLTDDQGRSILPSVVNYAQDTALVGYEAKAKAEQEPENTIISVKRLIGRSLKDIQARYPSLPYQFKESDNGLPILQTAQGDKNPIEVSADILKSLGKRAEETLGGELAGVVITVPAYFDDAQRAGTKDAAKLAGLHVLRLLNEPTAAAIAYGLDSGQEGVIAVYDLGGGTFDISILRLSKGVFEVLATGGDSALGGDDFDHLLADYLMEQAGLEAPLSAEKNRALLNIATATKIAFSEQDCVDVDVFGWKGAVTREQFEELIRPLVKKTLMSCRRALKDADVDAEDVLEAVMVGGSTRTLLVREMVGEFFGRTPLTSINPDEVVAIGAGIQADILAGNKPDSEMLLLDVIPLSLGIETMGGLVEKIIPRNTTIPVARAQEFTTFKDGQTAMSVHTVQGEREMVDDCRSLARFSLKGIPPMVAGAAHIRVTYQVDADGLLSVTAMEKSTGVQAEIQVKPSYGLSDDEVANMLRDSMTYAKEDMQARALAEQRVEADRVIEGLIAAMQADGDELLSDQEKQDLVKVIEALIELRNGEDADAIEQGIKDTDKASQDFASRRMDKSIRAALSGQSVNDI</sequence>
<name>HSCA_VIBC1</name>
<evidence type="ECO:0000255" key="1">
    <source>
        <dbReference type="HAMAP-Rule" id="MF_00679"/>
    </source>
</evidence>